<proteinExistence type="inferred from homology"/>
<organism>
    <name type="scientific">Vibrio cholerae serotype O1 (strain M66-2)</name>
    <dbReference type="NCBI Taxonomy" id="579112"/>
    <lineage>
        <taxon>Bacteria</taxon>
        <taxon>Pseudomonadati</taxon>
        <taxon>Pseudomonadota</taxon>
        <taxon>Gammaproteobacteria</taxon>
        <taxon>Vibrionales</taxon>
        <taxon>Vibrionaceae</taxon>
        <taxon>Vibrio</taxon>
    </lineage>
</organism>
<feature type="chain" id="PRO_1000147744" description="Pole-localizer protein TmaR">
    <location>
        <begin position="1"/>
        <end position="106"/>
    </location>
</feature>
<feature type="coiled-coil region" evidence="1">
    <location>
        <begin position="7"/>
        <end position="34"/>
    </location>
</feature>
<gene>
    <name evidence="1" type="primary">tmaR</name>
    <name type="ordered locus">VCM66_A0700</name>
</gene>
<evidence type="ECO:0000255" key="1">
    <source>
        <dbReference type="HAMAP-Rule" id="MF_00683"/>
    </source>
</evidence>
<reference key="1">
    <citation type="journal article" date="2008" name="PLoS ONE">
        <title>A recalibrated molecular clock and independent origins for the cholera pandemic clones.</title>
        <authorList>
            <person name="Feng L."/>
            <person name="Reeves P.R."/>
            <person name="Lan R."/>
            <person name="Ren Y."/>
            <person name="Gao C."/>
            <person name="Zhou Z."/>
            <person name="Ren Y."/>
            <person name="Cheng J."/>
            <person name="Wang W."/>
            <person name="Wang J."/>
            <person name="Qian W."/>
            <person name="Li D."/>
            <person name="Wang L."/>
        </authorList>
    </citation>
    <scope>NUCLEOTIDE SEQUENCE [LARGE SCALE GENOMIC DNA]</scope>
    <source>
        <strain>M66-2</strain>
    </source>
</reference>
<sequence>MNSVFEIVSLARRKNKLQRELDDNEKKVRDNRKRVELLVNLLDYIKPNMSHEEILGIIKNMKSDYEDRVDDHIIKSAEISKERRDISRRIKDLTEHDKQMTQGKKA</sequence>
<accession>C3LW07</accession>
<comment type="function">
    <text evidence="1">Pole-localizer protein involved in the regulation of several cellular processes.</text>
</comment>
<comment type="subcellular location">
    <subcellularLocation>
        <location evidence="1">Cytoplasm</location>
    </subcellularLocation>
</comment>
<comment type="similarity">
    <text evidence="1">Belongs to the pole-localizer TmaR family.</text>
</comment>
<name>TMAR_VIBCM</name>
<keyword id="KW-0175">Coiled coil</keyword>
<keyword id="KW-0963">Cytoplasm</keyword>
<protein>
    <recommendedName>
        <fullName evidence="1">Pole-localizer protein TmaR</fullName>
    </recommendedName>
</protein>
<dbReference type="EMBL" id="CP001234">
    <property type="protein sequence ID" value="ACP07662.1"/>
    <property type="molecule type" value="Genomic_DNA"/>
</dbReference>
<dbReference type="RefSeq" id="WP_001089529.1">
    <property type="nucleotide sequence ID" value="NC_012580.1"/>
</dbReference>
<dbReference type="SMR" id="C3LW07"/>
<dbReference type="KEGG" id="vcm:VCM66_A0700"/>
<dbReference type="HOGENOM" id="CLU_153146_0_0_6"/>
<dbReference type="Proteomes" id="UP000001217">
    <property type="component" value="Chromosome II"/>
</dbReference>
<dbReference type="GO" id="GO:0005829">
    <property type="term" value="C:cytosol"/>
    <property type="evidence" value="ECO:0007669"/>
    <property type="project" value="TreeGrafter"/>
</dbReference>
<dbReference type="HAMAP" id="MF_00683">
    <property type="entry name" value="Pole_loc_TmaR"/>
    <property type="match status" value="1"/>
</dbReference>
<dbReference type="InterPro" id="IPR007458">
    <property type="entry name" value="DUF496"/>
</dbReference>
<dbReference type="NCBIfam" id="NF003844">
    <property type="entry name" value="PRK05423.1"/>
    <property type="match status" value="1"/>
</dbReference>
<dbReference type="PANTHER" id="PTHR39591">
    <property type="entry name" value="UPF0265 PROTEIN YEEX"/>
    <property type="match status" value="1"/>
</dbReference>
<dbReference type="PANTHER" id="PTHR39591:SF1">
    <property type="entry name" value="UPF0265 PROTEIN YEEX"/>
    <property type="match status" value="1"/>
</dbReference>
<dbReference type="Pfam" id="PF04363">
    <property type="entry name" value="DUF496"/>
    <property type="match status" value="1"/>
</dbReference>
<dbReference type="PIRSF" id="PIRSF028773">
    <property type="entry name" value="UCP028773"/>
    <property type="match status" value="1"/>
</dbReference>